<reference key="1">
    <citation type="journal article" date="2004" name="Nat. Biotechnol.">
        <title>Complete sequence and comparative genome analysis of the dairy bacterium Streptococcus thermophilus.</title>
        <authorList>
            <person name="Bolotin A."/>
            <person name="Quinquis B."/>
            <person name="Renault P."/>
            <person name="Sorokin A."/>
            <person name="Ehrlich S.D."/>
            <person name="Kulakauskas S."/>
            <person name="Lapidus A."/>
            <person name="Goltsman E."/>
            <person name="Mazur M."/>
            <person name="Pusch G.D."/>
            <person name="Fonstein M."/>
            <person name="Overbeek R."/>
            <person name="Kyprides N."/>
            <person name="Purnelle B."/>
            <person name="Prozzi D."/>
            <person name="Ngui K."/>
            <person name="Masuy D."/>
            <person name="Hancy F."/>
            <person name="Burteau S."/>
            <person name="Boutry M."/>
            <person name="Delcour J."/>
            <person name="Goffeau A."/>
            <person name="Hols P."/>
        </authorList>
    </citation>
    <scope>NUCLEOTIDE SEQUENCE [LARGE SCALE GENOMIC DNA]</scope>
    <source>
        <strain>ATCC BAA-250 / LMG 18311</strain>
    </source>
</reference>
<gene>
    <name evidence="1" type="primary">mraY</name>
    <name type="ordered locus">stu1700</name>
</gene>
<feature type="chain" id="PRO_0000108911" description="Phospho-N-acetylmuramoyl-pentapeptide-transferase">
    <location>
        <begin position="1"/>
        <end position="340"/>
    </location>
</feature>
<feature type="transmembrane region" description="Helical" evidence="1">
    <location>
        <begin position="3"/>
        <end position="23"/>
    </location>
</feature>
<feature type="transmembrane region" description="Helical" evidence="1">
    <location>
        <begin position="53"/>
        <end position="73"/>
    </location>
</feature>
<feature type="transmembrane region" description="Helical" evidence="1">
    <location>
        <begin position="79"/>
        <end position="99"/>
    </location>
</feature>
<feature type="transmembrane region" description="Helical" evidence="1">
    <location>
        <begin position="119"/>
        <end position="139"/>
    </location>
</feature>
<feature type="transmembrane region" description="Helical" evidence="1">
    <location>
        <begin position="144"/>
        <end position="164"/>
    </location>
</feature>
<feature type="transmembrane region" description="Helical" evidence="1">
    <location>
        <begin position="176"/>
        <end position="196"/>
    </location>
</feature>
<feature type="transmembrane region" description="Helical" evidence="1">
    <location>
        <begin position="200"/>
        <end position="220"/>
    </location>
</feature>
<feature type="transmembrane region" description="Helical" evidence="1">
    <location>
        <begin position="227"/>
        <end position="247"/>
    </location>
</feature>
<feature type="transmembrane region" description="Helical" evidence="1">
    <location>
        <begin position="250"/>
        <end position="270"/>
    </location>
</feature>
<feature type="transmembrane region" description="Helical" evidence="1">
    <location>
        <begin position="315"/>
        <end position="335"/>
    </location>
</feature>
<sequence>MTMSLIAGVAAFVLTVLAMPHFITYYKIKKIGGQQMHEDVKQHLAKAGTPTMGGTVFLVVAILISLIFNFHVFTEGHPAYGATAGILFVILIYGIIGFLDDFLKIFHQINEGLKPWQKMALQIVAGLLFYFIHVLPSGTNSLAIGGLTIQLGVFYVLFVLFWIVGFSNAVNLTDGIDGLASVSVVISLIAYGIIAFVKGELAILTIIITMIGALLGFFVFNHKPAKVFMGDVGSLSLGAMLAVISIALRVEWTLLLIGVVYVLETASVMLQVSYFKYTKRKYGEGRRIFRMTPFHHHLELGGISGKGEKWSEWKVDAFLWTIGALASSITLWMVLGNVMK</sequence>
<accession>Q5M2U9</accession>
<keyword id="KW-0131">Cell cycle</keyword>
<keyword id="KW-0132">Cell division</keyword>
<keyword id="KW-1003">Cell membrane</keyword>
<keyword id="KW-0133">Cell shape</keyword>
<keyword id="KW-0961">Cell wall biogenesis/degradation</keyword>
<keyword id="KW-0460">Magnesium</keyword>
<keyword id="KW-0472">Membrane</keyword>
<keyword id="KW-0479">Metal-binding</keyword>
<keyword id="KW-0573">Peptidoglycan synthesis</keyword>
<keyword id="KW-1185">Reference proteome</keyword>
<keyword id="KW-0808">Transferase</keyword>
<keyword id="KW-0812">Transmembrane</keyword>
<keyword id="KW-1133">Transmembrane helix</keyword>
<comment type="function">
    <text evidence="1">Catalyzes the initial step of the lipid cycle reactions in the biosynthesis of the cell wall peptidoglycan: transfers peptidoglycan precursor phospho-MurNAc-pentapeptide from UDP-MurNAc-pentapeptide onto the lipid carrier undecaprenyl phosphate, yielding undecaprenyl-pyrophosphoryl-MurNAc-pentapeptide, known as lipid I.</text>
</comment>
<comment type="catalytic activity">
    <reaction evidence="1">
        <text>UDP-N-acetyl-alpha-D-muramoyl-L-alanyl-gamma-D-glutamyl-L-lysyl-D-alanyl-D-alanine + di-trans,octa-cis-undecaprenyl phosphate = Mur2Ac(oyl-L-Ala-gamma-D-Glu-L-Lys-D-Ala-D-Ala)-di-trans,octa-cis-undecaprenyl diphosphate + UMP</text>
        <dbReference type="Rhea" id="RHEA:21920"/>
        <dbReference type="ChEBI" id="CHEBI:57865"/>
        <dbReference type="ChEBI" id="CHEBI:60032"/>
        <dbReference type="ChEBI" id="CHEBI:60392"/>
        <dbReference type="ChEBI" id="CHEBI:70758"/>
        <dbReference type="EC" id="2.7.8.13"/>
    </reaction>
</comment>
<comment type="cofactor">
    <cofactor evidence="1">
        <name>Mg(2+)</name>
        <dbReference type="ChEBI" id="CHEBI:18420"/>
    </cofactor>
</comment>
<comment type="pathway">
    <text evidence="1">Cell wall biogenesis; peptidoglycan biosynthesis.</text>
</comment>
<comment type="subcellular location">
    <subcellularLocation>
        <location evidence="1">Cell membrane</location>
        <topology evidence="1">Multi-pass membrane protein</topology>
    </subcellularLocation>
</comment>
<comment type="similarity">
    <text evidence="1">Belongs to the glycosyltransferase 4 family. MraY subfamily.</text>
</comment>
<proteinExistence type="inferred from homology"/>
<evidence type="ECO:0000255" key="1">
    <source>
        <dbReference type="HAMAP-Rule" id="MF_00038"/>
    </source>
</evidence>
<protein>
    <recommendedName>
        <fullName evidence="1">Phospho-N-acetylmuramoyl-pentapeptide-transferase</fullName>
        <ecNumber evidence="1">2.7.8.13</ecNumber>
    </recommendedName>
    <alternativeName>
        <fullName evidence="1">UDP-MurNAc-pentapeptide phosphotransferase</fullName>
    </alternativeName>
</protein>
<dbReference type="EC" id="2.7.8.13" evidence="1"/>
<dbReference type="EMBL" id="CP000023">
    <property type="protein sequence ID" value="AAV61301.1"/>
    <property type="molecule type" value="Genomic_DNA"/>
</dbReference>
<dbReference type="RefSeq" id="WP_011226507.1">
    <property type="nucleotide sequence ID" value="NC_006448.1"/>
</dbReference>
<dbReference type="SMR" id="Q5M2U9"/>
<dbReference type="STRING" id="264199.stu1700"/>
<dbReference type="DNASU" id="3165249"/>
<dbReference type="GeneID" id="66899439"/>
<dbReference type="KEGG" id="stl:stu1700"/>
<dbReference type="PATRIC" id="fig|264199.4.peg.1673"/>
<dbReference type="eggNOG" id="COG0472">
    <property type="taxonomic scope" value="Bacteria"/>
</dbReference>
<dbReference type="HOGENOM" id="CLU_023982_0_1_9"/>
<dbReference type="UniPathway" id="UPA00219"/>
<dbReference type="Proteomes" id="UP000001170">
    <property type="component" value="Chromosome"/>
</dbReference>
<dbReference type="GO" id="GO:0005886">
    <property type="term" value="C:plasma membrane"/>
    <property type="evidence" value="ECO:0007669"/>
    <property type="project" value="UniProtKB-SubCell"/>
</dbReference>
<dbReference type="GO" id="GO:0046872">
    <property type="term" value="F:metal ion binding"/>
    <property type="evidence" value="ECO:0007669"/>
    <property type="project" value="UniProtKB-KW"/>
</dbReference>
<dbReference type="GO" id="GO:0008963">
    <property type="term" value="F:phospho-N-acetylmuramoyl-pentapeptide-transferase activity"/>
    <property type="evidence" value="ECO:0007669"/>
    <property type="project" value="UniProtKB-UniRule"/>
</dbReference>
<dbReference type="GO" id="GO:0051301">
    <property type="term" value="P:cell division"/>
    <property type="evidence" value="ECO:0007669"/>
    <property type="project" value="UniProtKB-KW"/>
</dbReference>
<dbReference type="GO" id="GO:0071555">
    <property type="term" value="P:cell wall organization"/>
    <property type="evidence" value="ECO:0007669"/>
    <property type="project" value="UniProtKB-KW"/>
</dbReference>
<dbReference type="GO" id="GO:0009252">
    <property type="term" value="P:peptidoglycan biosynthetic process"/>
    <property type="evidence" value="ECO:0007669"/>
    <property type="project" value="UniProtKB-UniRule"/>
</dbReference>
<dbReference type="GO" id="GO:0008360">
    <property type="term" value="P:regulation of cell shape"/>
    <property type="evidence" value="ECO:0007669"/>
    <property type="project" value="UniProtKB-KW"/>
</dbReference>
<dbReference type="CDD" id="cd06852">
    <property type="entry name" value="GT_MraY"/>
    <property type="match status" value="1"/>
</dbReference>
<dbReference type="HAMAP" id="MF_00038">
    <property type="entry name" value="MraY"/>
    <property type="match status" value="1"/>
</dbReference>
<dbReference type="InterPro" id="IPR000715">
    <property type="entry name" value="Glycosyl_transferase_4"/>
</dbReference>
<dbReference type="InterPro" id="IPR003524">
    <property type="entry name" value="PNAcMuramoyl-5peptid_Trfase"/>
</dbReference>
<dbReference type="InterPro" id="IPR018480">
    <property type="entry name" value="PNAcMuramoyl-5peptid_Trfase_CS"/>
</dbReference>
<dbReference type="NCBIfam" id="TIGR00445">
    <property type="entry name" value="mraY"/>
    <property type="match status" value="1"/>
</dbReference>
<dbReference type="PANTHER" id="PTHR22926">
    <property type="entry name" value="PHOSPHO-N-ACETYLMURAMOYL-PENTAPEPTIDE-TRANSFERASE"/>
    <property type="match status" value="1"/>
</dbReference>
<dbReference type="PANTHER" id="PTHR22926:SF5">
    <property type="entry name" value="PHOSPHO-N-ACETYLMURAMOYL-PENTAPEPTIDE-TRANSFERASE HOMOLOG"/>
    <property type="match status" value="1"/>
</dbReference>
<dbReference type="Pfam" id="PF00953">
    <property type="entry name" value="Glycos_transf_4"/>
    <property type="match status" value="1"/>
</dbReference>
<dbReference type="Pfam" id="PF10555">
    <property type="entry name" value="MraY_sig1"/>
    <property type="match status" value="1"/>
</dbReference>
<dbReference type="PROSITE" id="PS01348">
    <property type="entry name" value="MRAY_2"/>
    <property type="match status" value="1"/>
</dbReference>
<organism>
    <name type="scientific">Streptococcus thermophilus (strain ATCC BAA-250 / LMG 18311)</name>
    <dbReference type="NCBI Taxonomy" id="264199"/>
    <lineage>
        <taxon>Bacteria</taxon>
        <taxon>Bacillati</taxon>
        <taxon>Bacillota</taxon>
        <taxon>Bacilli</taxon>
        <taxon>Lactobacillales</taxon>
        <taxon>Streptococcaceae</taxon>
        <taxon>Streptococcus</taxon>
    </lineage>
</organism>
<name>MRAY_STRT2</name>